<reference key="1">
    <citation type="journal article" date="1996" name="Immunogenetics">
        <title>Molecular evolution of the N-formyl peptide and C5a receptors in non-human primates.</title>
        <authorList>
            <person name="Alvarez V."/>
            <person name="Coto E."/>
            <person name="Sehen F."/>
            <person name="Gouzalek-Koces S."/>
            <person name="Lopez-Larrea C."/>
        </authorList>
    </citation>
    <scope>NUCLEOTIDE SEQUENCE [GENOMIC DNA]</scope>
</reference>
<name>FPR3_GORGO</name>
<feature type="chain" id="PRO_0000069456" description="N-formyl peptide receptor 3">
    <location>
        <begin position="1"/>
        <end position="349" status="greater than"/>
    </location>
</feature>
<feature type="topological domain" description="Extracellular" evidence="1">
    <location>
        <begin position="1"/>
        <end position="27"/>
    </location>
</feature>
<feature type="transmembrane region" description="Helical; Name=1" evidence="1">
    <location>
        <begin position="28"/>
        <end position="50"/>
    </location>
</feature>
<feature type="topological domain" description="Cytoplasmic" evidence="1">
    <location>
        <begin position="51"/>
        <end position="61"/>
    </location>
</feature>
<feature type="transmembrane region" description="Helical; Name=2" evidence="1">
    <location>
        <begin position="62"/>
        <end position="83"/>
    </location>
</feature>
<feature type="topological domain" description="Extracellular" evidence="1">
    <location>
        <begin position="84"/>
        <end position="100"/>
    </location>
</feature>
<feature type="transmembrane region" description="Helical; Name=3" evidence="1">
    <location>
        <begin position="101"/>
        <end position="121"/>
    </location>
</feature>
<feature type="topological domain" description="Cytoplasmic" evidence="1">
    <location>
        <begin position="122"/>
        <end position="140"/>
    </location>
</feature>
<feature type="transmembrane region" description="Helical; Name=4" evidence="1">
    <location>
        <begin position="141"/>
        <end position="162"/>
    </location>
</feature>
<feature type="topological domain" description="Extracellular" evidence="1">
    <location>
        <begin position="163"/>
        <end position="205"/>
    </location>
</feature>
<feature type="transmembrane region" description="Helical; Name=5" evidence="1">
    <location>
        <begin position="206"/>
        <end position="226"/>
    </location>
</feature>
<feature type="topological domain" description="Cytoplasmic" evidence="1">
    <location>
        <begin position="227"/>
        <end position="242"/>
    </location>
</feature>
<feature type="transmembrane region" description="Helical; Name=6" evidence="1">
    <location>
        <begin position="243"/>
        <end position="266"/>
    </location>
</feature>
<feature type="topological domain" description="Extracellular" evidence="1">
    <location>
        <begin position="267"/>
        <end position="286"/>
    </location>
</feature>
<feature type="transmembrane region" description="Helical; Name=7" evidence="1">
    <location>
        <begin position="287"/>
        <end position="306"/>
    </location>
</feature>
<feature type="topological domain" description="Cytoplasmic" evidence="1">
    <location>
        <begin position="307"/>
        <end position="349" status="greater than"/>
    </location>
</feature>
<feature type="region of interest" description="Disordered" evidence="3">
    <location>
        <begin position="327"/>
        <end position="349"/>
    </location>
</feature>
<feature type="compositionally biased region" description="Polar residues" evidence="3">
    <location>
        <begin position="331"/>
        <end position="343"/>
    </location>
</feature>
<feature type="glycosylation site" description="N-linked (GlcNAc...) asparagine" evidence="1">
    <location>
        <position position="4"/>
    </location>
</feature>
<feature type="glycosylation site" description="N-linked (GlcNAc...) asparagine" evidence="1">
    <location>
        <position position="10"/>
    </location>
</feature>
<feature type="disulfide bond" evidence="2">
    <location>
        <begin position="98"/>
        <end position="176"/>
    </location>
</feature>
<feature type="non-terminal residue">
    <location>
        <position position="349"/>
    </location>
</feature>
<sequence length="349" mass="39433">METNFSIPLNETEEVLPEPAGHTVLWIFSLLVHGVTFIFGVLGNGLVIWVAGFLMTRTVNTICYLNLALADFSFSAILPFHMVSVAMREKWPFGSFLCKLVHVMIDINLFVSVYLITIIALDRCICVLHPAWAQNHRTMSLAKRVMTGLWILTIVLTLPNFIFWTTISTTNGDTYCIFNFPFWGDTAVERLNVFITMAKVFLILHFIIGFSMPMSIITVCYGIIAAKIHRNHMIKSSRPLRVFAAVVASFFICWFPYELIGILMAVWLKEMLLNGKYKIILVLINPTSSLAFFNSCLNPILYVFLGSNFQERLIRSLPTSLERALTEVPDSAQTSNTHTTSASPPEETE</sequence>
<gene>
    <name type="primary">FPR3</name>
    <name type="synonym">FPRL2</name>
</gene>
<organism>
    <name type="scientific">Gorilla gorilla gorilla</name>
    <name type="common">Western lowland gorilla</name>
    <dbReference type="NCBI Taxonomy" id="9595"/>
    <lineage>
        <taxon>Eukaryota</taxon>
        <taxon>Metazoa</taxon>
        <taxon>Chordata</taxon>
        <taxon>Craniata</taxon>
        <taxon>Vertebrata</taxon>
        <taxon>Euteleostomi</taxon>
        <taxon>Mammalia</taxon>
        <taxon>Eutheria</taxon>
        <taxon>Euarchontoglires</taxon>
        <taxon>Primates</taxon>
        <taxon>Haplorrhini</taxon>
        <taxon>Catarrhini</taxon>
        <taxon>Hominidae</taxon>
        <taxon>Gorilla</taxon>
    </lineage>
</organism>
<protein>
    <recommendedName>
        <fullName>N-formyl peptide receptor 3</fullName>
    </recommendedName>
    <alternativeName>
        <fullName>FMLP-related receptor II</fullName>
        <shortName>FMLP-R-II</shortName>
    </alternativeName>
    <alternativeName>
        <fullName>Formyl peptide receptor-like 2</fullName>
    </alternativeName>
</protein>
<proteinExistence type="inferred from homology"/>
<evidence type="ECO:0000255" key="1"/>
<evidence type="ECO:0000255" key="2">
    <source>
        <dbReference type="PROSITE-ProRule" id="PRU00521"/>
    </source>
</evidence>
<evidence type="ECO:0000256" key="3">
    <source>
        <dbReference type="SAM" id="MobiDB-lite"/>
    </source>
</evidence>
<comment type="function">
    <text>Low affinity receptor for N-formyl-methionyl peptides, which are powerful neutrophils chemotactic factors. Binding of FMLP to the receptor causes activation of neutrophils. This response is mediated via a G-protein that activates a phosphatidylinositol-calcium second messenger system.</text>
</comment>
<comment type="subcellular location">
    <subcellularLocation>
        <location>Cell membrane</location>
        <topology>Multi-pass membrane protein</topology>
    </subcellularLocation>
</comment>
<comment type="similarity">
    <text evidence="2">Belongs to the G-protein coupled receptor 1 family.</text>
</comment>
<accession>P79178</accession>
<keyword id="KW-1003">Cell membrane</keyword>
<keyword id="KW-0145">Chemotaxis</keyword>
<keyword id="KW-1015">Disulfide bond</keyword>
<keyword id="KW-0297">G-protein coupled receptor</keyword>
<keyword id="KW-0325">Glycoprotein</keyword>
<keyword id="KW-0472">Membrane</keyword>
<keyword id="KW-0675">Receptor</keyword>
<keyword id="KW-1185">Reference proteome</keyword>
<keyword id="KW-0807">Transducer</keyword>
<keyword id="KW-0812">Transmembrane</keyword>
<keyword id="KW-1133">Transmembrane helix</keyword>
<dbReference type="EMBL" id="X97742">
    <property type="protein sequence ID" value="CAA66326.1"/>
    <property type="molecule type" value="Genomic_DNA"/>
</dbReference>
<dbReference type="SMR" id="P79178"/>
<dbReference type="STRING" id="9593.ENSGGOP00000008782"/>
<dbReference type="GlyCosmos" id="P79178">
    <property type="glycosylation" value="2 sites, No reported glycans"/>
</dbReference>
<dbReference type="eggNOG" id="KOG3656">
    <property type="taxonomic scope" value="Eukaryota"/>
</dbReference>
<dbReference type="InParanoid" id="P79178"/>
<dbReference type="Proteomes" id="UP000001519">
    <property type="component" value="Unplaced"/>
</dbReference>
<dbReference type="GO" id="GO:0005886">
    <property type="term" value="C:plasma membrane"/>
    <property type="evidence" value="ECO:0000318"/>
    <property type="project" value="GO_Central"/>
</dbReference>
<dbReference type="GO" id="GO:0004875">
    <property type="term" value="F:complement receptor activity"/>
    <property type="evidence" value="ECO:0000318"/>
    <property type="project" value="GO_Central"/>
</dbReference>
<dbReference type="GO" id="GO:0004982">
    <property type="term" value="F:N-formyl peptide receptor activity"/>
    <property type="evidence" value="ECO:0000318"/>
    <property type="project" value="GO_Central"/>
</dbReference>
<dbReference type="GO" id="GO:0006935">
    <property type="term" value="P:chemotaxis"/>
    <property type="evidence" value="ECO:0007669"/>
    <property type="project" value="UniProtKB-KW"/>
</dbReference>
<dbReference type="GO" id="GO:0002430">
    <property type="term" value="P:complement receptor mediated signaling pathway"/>
    <property type="evidence" value="ECO:0000318"/>
    <property type="project" value="GO_Central"/>
</dbReference>
<dbReference type="GO" id="GO:0006954">
    <property type="term" value="P:inflammatory response"/>
    <property type="evidence" value="ECO:0000318"/>
    <property type="project" value="GO_Central"/>
</dbReference>
<dbReference type="GO" id="GO:0007200">
    <property type="term" value="P:phospholipase C-activating G protein-coupled receptor signaling pathway"/>
    <property type="evidence" value="ECO:0000318"/>
    <property type="project" value="GO_Central"/>
</dbReference>
<dbReference type="GO" id="GO:0007204">
    <property type="term" value="P:positive regulation of cytosolic calcium ion concentration"/>
    <property type="evidence" value="ECO:0000318"/>
    <property type="project" value="GO_Central"/>
</dbReference>
<dbReference type="FunFam" id="1.20.1070.10:FF:000034">
    <property type="entry name" value="G-protein coupled receptor 1"/>
    <property type="match status" value="1"/>
</dbReference>
<dbReference type="Gene3D" id="1.20.1070.10">
    <property type="entry name" value="Rhodopsin 7-helix transmembrane proteins"/>
    <property type="match status" value="1"/>
</dbReference>
<dbReference type="InterPro" id="IPR000826">
    <property type="entry name" value="Formyl_rcpt-rel"/>
</dbReference>
<dbReference type="InterPro" id="IPR000276">
    <property type="entry name" value="GPCR_Rhodpsn"/>
</dbReference>
<dbReference type="InterPro" id="IPR017452">
    <property type="entry name" value="GPCR_Rhodpsn_7TM"/>
</dbReference>
<dbReference type="PANTHER" id="PTHR24225:SF58">
    <property type="match status" value="1"/>
</dbReference>
<dbReference type="PANTHER" id="PTHR24225">
    <property type="entry name" value="CHEMOTACTIC RECEPTOR"/>
    <property type="match status" value="1"/>
</dbReference>
<dbReference type="Pfam" id="PF00001">
    <property type="entry name" value="7tm_1"/>
    <property type="match status" value="1"/>
</dbReference>
<dbReference type="PRINTS" id="PR00526">
    <property type="entry name" value="FMETLEUPHER"/>
</dbReference>
<dbReference type="PRINTS" id="PR00237">
    <property type="entry name" value="GPCRRHODOPSN"/>
</dbReference>
<dbReference type="SUPFAM" id="SSF81321">
    <property type="entry name" value="Family A G protein-coupled receptor-like"/>
    <property type="match status" value="1"/>
</dbReference>
<dbReference type="PROSITE" id="PS00237">
    <property type="entry name" value="G_PROTEIN_RECEP_F1_1"/>
    <property type="match status" value="1"/>
</dbReference>
<dbReference type="PROSITE" id="PS50262">
    <property type="entry name" value="G_PROTEIN_RECEP_F1_2"/>
    <property type="match status" value="1"/>
</dbReference>